<reference key="1">
    <citation type="journal article" date="2004" name="Plant Physiol.">
        <title>A comparison of rice chloroplast genomes.</title>
        <authorList>
            <person name="Tang J."/>
            <person name="Xia H."/>
            <person name="Cao M."/>
            <person name="Zhang X."/>
            <person name="Zeng W."/>
            <person name="Hu S."/>
            <person name="Tong W."/>
            <person name="Wang J."/>
            <person name="Wang J."/>
            <person name="Yu J."/>
            <person name="Yang H."/>
            <person name="Zhu L."/>
        </authorList>
    </citation>
    <scope>NUCLEOTIDE SEQUENCE [LARGE SCALE GENOMIC DNA]</scope>
    <source>
        <strain>cv. 93-11</strain>
    </source>
</reference>
<dbReference type="EC" id="7.1.1.-"/>
<dbReference type="EMBL" id="AY522329">
    <property type="status" value="NOT_ANNOTATED_CDS"/>
    <property type="molecule type" value="Genomic_DNA"/>
</dbReference>
<dbReference type="SMR" id="P0C345"/>
<dbReference type="STRING" id="39946.P0C345"/>
<dbReference type="Proteomes" id="UP000007015">
    <property type="component" value="Chloroplast"/>
</dbReference>
<dbReference type="GO" id="GO:0009535">
    <property type="term" value="C:chloroplast thylakoid membrane"/>
    <property type="evidence" value="ECO:0007669"/>
    <property type="project" value="UniProtKB-SubCell"/>
</dbReference>
<dbReference type="GO" id="GO:0009536">
    <property type="term" value="C:plastid"/>
    <property type="evidence" value="ECO:0000305"/>
    <property type="project" value="Gramene"/>
</dbReference>
<dbReference type="GO" id="GO:0003954">
    <property type="term" value="F:NADH dehydrogenase activity"/>
    <property type="evidence" value="ECO:0007669"/>
    <property type="project" value="TreeGrafter"/>
</dbReference>
<dbReference type="GO" id="GO:0016655">
    <property type="term" value="F:oxidoreductase activity, acting on NAD(P)H, quinone or similar compound as acceptor"/>
    <property type="evidence" value="ECO:0007669"/>
    <property type="project" value="UniProtKB-UniRule"/>
</dbReference>
<dbReference type="GO" id="GO:0048038">
    <property type="term" value="F:quinone binding"/>
    <property type="evidence" value="ECO:0007669"/>
    <property type="project" value="UniProtKB-KW"/>
</dbReference>
<dbReference type="GO" id="GO:0009060">
    <property type="term" value="P:aerobic respiration"/>
    <property type="evidence" value="ECO:0007669"/>
    <property type="project" value="TreeGrafter"/>
</dbReference>
<dbReference type="GO" id="GO:0019684">
    <property type="term" value="P:photosynthesis, light reaction"/>
    <property type="evidence" value="ECO:0007669"/>
    <property type="project" value="UniProtKB-UniRule"/>
</dbReference>
<dbReference type="HAMAP" id="MF_01350">
    <property type="entry name" value="NDH1_NuoH"/>
    <property type="match status" value="1"/>
</dbReference>
<dbReference type="InterPro" id="IPR001694">
    <property type="entry name" value="NADH_UbQ_OxRdtase_su1/FPO"/>
</dbReference>
<dbReference type="InterPro" id="IPR018086">
    <property type="entry name" value="NADH_UbQ_OxRdtase_su1_CS"/>
</dbReference>
<dbReference type="NCBIfam" id="NF004741">
    <property type="entry name" value="PRK06076.1-2"/>
    <property type="match status" value="1"/>
</dbReference>
<dbReference type="PANTHER" id="PTHR11432">
    <property type="entry name" value="NADH DEHYDROGENASE SUBUNIT 1"/>
    <property type="match status" value="1"/>
</dbReference>
<dbReference type="PANTHER" id="PTHR11432:SF3">
    <property type="entry name" value="NADH-UBIQUINONE OXIDOREDUCTASE CHAIN 1"/>
    <property type="match status" value="1"/>
</dbReference>
<dbReference type="Pfam" id="PF00146">
    <property type="entry name" value="NADHdh"/>
    <property type="match status" value="1"/>
</dbReference>
<dbReference type="PROSITE" id="PS00667">
    <property type="entry name" value="COMPLEX1_ND1_1"/>
    <property type="match status" value="1"/>
</dbReference>
<dbReference type="PROSITE" id="PS00668">
    <property type="entry name" value="COMPLEX1_ND1_2"/>
    <property type="match status" value="1"/>
</dbReference>
<organism>
    <name type="scientific">Oryza sativa subsp. indica</name>
    <name type="common">Rice</name>
    <dbReference type="NCBI Taxonomy" id="39946"/>
    <lineage>
        <taxon>Eukaryota</taxon>
        <taxon>Viridiplantae</taxon>
        <taxon>Streptophyta</taxon>
        <taxon>Embryophyta</taxon>
        <taxon>Tracheophyta</taxon>
        <taxon>Spermatophyta</taxon>
        <taxon>Magnoliopsida</taxon>
        <taxon>Liliopsida</taxon>
        <taxon>Poales</taxon>
        <taxon>Poaceae</taxon>
        <taxon>BOP clade</taxon>
        <taxon>Oryzoideae</taxon>
        <taxon>Oryzeae</taxon>
        <taxon>Oryzinae</taxon>
        <taxon>Oryza</taxon>
        <taxon>Oryza sativa</taxon>
    </lineage>
</organism>
<gene>
    <name type="primary">ndhA</name>
    <name type="ORF">9311173</name>
</gene>
<proteinExistence type="inferred from homology"/>
<evidence type="ECO:0000250" key="1"/>
<evidence type="ECO:0000255" key="2"/>
<evidence type="ECO:0000305" key="3"/>
<protein>
    <recommendedName>
        <fullName>NAD(P)H-quinone oxidoreductase subunit 1, chloroplastic</fullName>
        <ecNumber>7.1.1.-</ecNumber>
    </recommendedName>
    <alternativeName>
        <fullName>NAD(P)H dehydrogenase subunit 1</fullName>
        <shortName>NDH subunit 1</shortName>
    </alternativeName>
    <alternativeName>
        <fullName>NADH-plastoquinone oxidoreductase subunit 1</fullName>
    </alternativeName>
</protein>
<feature type="chain" id="PRO_0000288689" description="NAD(P)H-quinone oxidoreductase subunit 1, chloroplastic">
    <location>
        <begin position="1"/>
        <end position="362"/>
    </location>
</feature>
<feature type="transmembrane region" description="Helical" evidence="2">
    <location>
        <begin position="27"/>
        <end position="47"/>
    </location>
</feature>
<feature type="transmembrane region" description="Helical" evidence="2">
    <location>
        <begin position="94"/>
        <end position="114"/>
    </location>
</feature>
<feature type="transmembrane region" description="Helical" evidence="2">
    <location>
        <begin position="128"/>
        <end position="148"/>
    </location>
</feature>
<feature type="transmembrane region" description="Helical" evidence="2">
    <location>
        <begin position="164"/>
        <end position="184"/>
    </location>
</feature>
<feature type="transmembrane region" description="Helical" evidence="2">
    <location>
        <begin position="202"/>
        <end position="222"/>
    </location>
</feature>
<feature type="transmembrane region" description="Helical" evidence="2">
    <location>
        <begin position="247"/>
        <end position="267"/>
    </location>
</feature>
<feature type="transmembrane region" description="Helical" evidence="2">
    <location>
        <begin position="303"/>
        <end position="323"/>
    </location>
</feature>
<feature type="transmembrane region" description="Helical" evidence="2">
    <location>
        <begin position="335"/>
        <end position="355"/>
    </location>
</feature>
<comment type="function">
    <text evidence="1">NDH shuttles electrons from NAD(P)H:plastoquinone, via FMN and iron-sulfur (Fe-S) centers, to quinones in the photosynthetic chain and possibly in a chloroplast respiratory chain. The immediate electron acceptor for the enzyme in this species is believed to be plastoquinone. Couples the redox reaction to proton translocation, and thus conserves the redox energy in a proton gradient (By similarity).</text>
</comment>
<comment type="catalytic activity">
    <reaction>
        <text>a plastoquinone + NADH + (n+1) H(+)(in) = a plastoquinol + NAD(+) + n H(+)(out)</text>
        <dbReference type="Rhea" id="RHEA:42608"/>
        <dbReference type="Rhea" id="RHEA-COMP:9561"/>
        <dbReference type="Rhea" id="RHEA-COMP:9562"/>
        <dbReference type="ChEBI" id="CHEBI:15378"/>
        <dbReference type="ChEBI" id="CHEBI:17757"/>
        <dbReference type="ChEBI" id="CHEBI:57540"/>
        <dbReference type="ChEBI" id="CHEBI:57945"/>
        <dbReference type="ChEBI" id="CHEBI:62192"/>
    </reaction>
</comment>
<comment type="catalytic activity">
    <reaction>
        <text>a plastoquinone + NADPH + (n+1) H(+)(in) = a plastoquinol + NADP(+) + n H(+)(out)</text>
        <dbReference type="Rhea" id="RHEA:42612"/>
        <dbReference type="Rhea" id="RHEA-COMP:9561"/>
        <dbReference type="Rhea" id="RHEA-COMP:9562"/>
        <dbReference type="ChEBI" id="CHEBI:15378"/>
        <dbReference type="ChEBI" id="CHEBI:17757"/>
        <dbReference type="ChEBI" id="CHEBI:57783"/>
        <dbReference type="ChEBI" id="CHEBI:58349"/>
        <dbReference type="ChEBI" id="CHEBI:62192"/>
    </reaction>
</comment>
<comment type="subunit">
    <text evidence="1">NDH is composed of at least 16 different subunits, 5 of which are encoded in the nucleus.</text>
</comment>
<comment type="subcellular location">
    <subcellularLocation>
        <location evidence="1">Plastid</location>
        <location evidence="1">Chloroplast thylakoid membrane</location>
        <topology evidence="1">Multi-pass membrane protein</topology>
    </subcellularLocation>
</comment>
<comment type="RNA editing">
    <location>
        <position position="158" evidence="1"/>
    </location>
    <location>
        <position position="188" evidence="1"/>
    </location>
    <location>
        <position position="357" evidence="1"/>
    </location>
</comment>
<comment type="similarity">
    <text evidence="3">Belongs to the complex I subunit 1 family.</text>
</comment>
<name>NU1C_ORYSI</name>
<geneLocation type="chloroplast"/>
<sequence length="362" mass="40468">MIIDRVQVEAINSFSNLELLKEVYGLIWILPILTLLLGITIEVLVIVWLEREISASIQQRIGPEYAGPLGLLQAIADGTKLLFKEDILPSRGDIPLFSIGPSIAVISILLSFLVIPLGYRFVLADLSIGVFLWIAISSIAPIGLLMAGYSSNNKYSFLGGLRAAAQSISYEIPLTFCVLAISLLSNSLSTVDIVEAQSKYGFFGWNLWRQPIGFLVFLISSLAECERLPFDLPEAEEELVAGYQTEYSGIKYGLFYLVSYLNLLVSSLFVTVLYLGGWNLSIPYISFFGFFQMNKMVGILEMTMSIFITLTKAYLFLFISITIRWTLPRMRMDQLLNLGWKFLLPISLGNLLLTTSFQLVSL</sequence>
<keyword id="KW-0150">Chloroplast</keyword>
<keyword id="KW-0472">Membrane</keyword>
<keyword id="KW-0520">NAD</keyword>
<keyword id="KW-0521">NADP</keyword>
<keyword id="KW-0934">Plastid</keyword>
<keyword id="KW-0618">Plastoquinone</keyword>
<keyword id="KW-0874">Quinone</keyword>
<keyword id="KW-1185">Reference proteome</keyword>
<keyword id="KW-0691">RNA editing</keyword>
<keyword id="KW-0793">Thylakoid</keyword>
<keyword id="KW-1278">Translocase</keyword>
<keyword id="KW-0812">Transmembrane</keyword>
<keyword id="KW-1133">Transmembrane helix</keyword>
<accession>P0C345</accession>